<name>CCSA_SOLTU</name>
<evidence type="ECO:0000255" key="1">
    <source>
        <dbReference type="HAMAP-Rule" id="MF_01391"/>
    </source>
</evidence>
<comment type="function">
    <text evidence="1">Required during biogenesis of c-type cytochromes (cytochrome c6 and cytochrome f) at the step of heme attachment.</text>
</comment>
<comment type="subunit">
    <text evidence="1">May interact with Ccs1.</text>
</comment>
<comment type="subcellular location">
    <subcellularLocation>
        <location evidence="1">Plastid</location>
        <location evidence="1">Chloroplast thylakoid membrane</location>
        <topology evidence="1">Multi-pass membrane protein</topology>
    </subcellularLocation>
</comment>
<comment type="similarity">
    <text evidence="1">Belongs to the CcmF/CycK/Ccl1/NrfE/CcsA family.</text>
</comment>
<proteinExistence type="inferred from homology"/>
<organism>
    <name type="scientific">Solanum tuberosum</name>
    <name type="common">Potato</name>
    <dbReference type="NCBI Taxonomy" id="4113"/>
    <lineage>
        <taxon>Eukaryota</taxon>
        <taxon>Viridiplantae</taxon>
        <taxon>Streptophyta</taxon>
        <taxon>Embryophyta</taxon>
        <taxon>Tracheophyta</taxon>
        <taxon>Spermatophyta</taxon>
        <taxon>Magnoliopsida</taxon>
        <taxon>eudicotyledons</taxon>
        <taxon>Gunneridae</taxon>
        <taxon>Pentapetalae</taxon>
        <taxon>asterids</taxon>
        <taxon>lamiids</taxon>
        <taxon>Solanales</taxon>
        <taxon>Solanaceae</taxon>
        <taxon>Solanoideae</taxon>
        <taxon>Solaneae</taxon>
        <taxon>Solanum</taxon>
    </lineage>
</organism>
<sequence length="313" mass="35512">MIFSTLEHILTHISFSIVSIVITIHLITFLVDEIVKLYDSSEKGIIVTFFCITGLLVTRWISSGHFPLSDLYESLIFLSWSFSLIHIIPYFKKNVLILSKITGPSAILTQGFATSGILTEIHQSGILVPALQSEWLIMHVSMMILGYAALLCGSLLSVALLVITFRKNRKLFYKSNGFLNESFFLGENVVENTSFFCAKNYYRSQLIQQLDYWSYRVISLGFTFLTIGILSGAVWANEAWGSYWNWDPKETWAFITWIVFAIYLHTRTNRNLRGPNSAIVASIGFLIIWICYFGVNLLGIGLHSYGSFPSTFN</sequence>
<gene>
    <name evidence="1" type="primary">ccsA</name>
</gene>
<feature type="chain" id="PRO_0000277576" description="Cytochrome c biogenesis protein CcsA">
    <location>
        <begin position="1"/>
        <end position="313"/>
    </location>
</feature>
<feature type="transmembrane region" description="Helical" evidence="1">
    <location>
        <begin position="9"/>
        <end position="29"/>
    </location>
</feature>
<feature type="transmembrane region" description="Helical" evidence="1">
    <location>
        <begin position="44"/>
        <end position="64"/>
    </location>
</feature>
<feature type="transmembrane region" description="Helical" evidence="1">
    <location>
        <begin position="71"/>
        <end position="91"/>
    </location>
</feature>
<feature type="transmembrane region" description="Helical" evidence="1">
    <location>
        <begin position="111"/>
        <end position="131"/>
    </location>
</feature>
<feature type="transmembrane region" description="Helical" evidence="1">
    <location>
        <begin position="143"/>
        <end position="163"/>
    </location>
</feature>
<feature type="transmembrane region" description="Helical" evidence="1">
    <location>
        <begin position="217"/>
        <end position="237"/>
    </location>
</feature>
<feature type="transmembrane region" description="Helical" evidence="1">
    <location>
        <begin position="244"/>
        <end position="264"/>
    </location>
</feature>
<feature type="transmembrane region" description="Helical" evidence="1">
    <location>
        <begin position="278"/>
        <end position="298"/>
    </location>
</feature>
<accession>Q2VED1</accession>
<dbReference type="EMBL" id="DQ231562">
    <property type="protein sequence ID" value="ABB90087.1"/>
    <property type="molecule type" value="Genomic_DNA"/>
</dbReference>
<dbReference type="EMBL" id="DQ386163">
    <property type="protein sequence ID" value="ABD47106.1"/>
    <property type="molecule type" value="Genomic_DNA"/>
</dbReference>
<dbReference type="RefSeq" id="YP_635688.1">
    <property type="nucleotide sequence ID" value="NC_008096.2"/>
</dbReference>
<dbReference type="SMR" id="Q2VED1"/>
<dbReference type="FunCoup" id="Q2VED1">
    <property type="interactions" value="23"/>
</dbReference>
<dbReference type="STRING" id="4113.Q2VED1"/>
<dbReference type="PaxDb" id="4113-PGSC0003DMT400074623"/>
<dbReference type="GeneID" id="4099904"/>
<dbReference type="KEGG" id="sot:4099904"/>
<dbReference type="eggNOG" id="ENOG502QU0T">
    <property type="taxonomic scope" value="Eukaryota"/>
</dbReference>
<dbReference type="InParanoid" id="Q2VED1"/>
<dbReference type="OrthoDB" id="1640at2759"/>
<dbReference type="Proteomes" id="UP000011115">
    <property type="component" value="Unassembled WGS sequence"/>
</dbReference>
<dbReference type="GO" id="GO:0009535">
    <property type="term" value="C:chloroplast thylakoid membrane"/>
    <property type="evidence" value="ECO:0007669"/>
    <property type="project" value="UniProtKB-SubCell"/>
</dbReference>
<dbReference type="GO" id="GO:0020037">
    <property type="term" value="F:heme binding"/>
    <property type="evidence" value="ECO:0007669"/>
    <property type="project" value="InterPro"/>
</dbReference>
<dbReference type="GO" id="GO:0017004">
    <property type="term" value="P:cytochrome complex assembly"/>
    <property type="evidence" value="ECO:0007669"/>
    <property type="project" value="UniProtKB-UniRule"/>
</dbReference>
<dbReference type="HAMAP" id="MF_01391">
    <property type="entry name" value="CytC_CcsA"/>
    <property type="match status" value="1"/>
</dbReference>
<dbReference type="InterPro" id="IPR002541">
    <property type="entry name" value="Cyt_c_assembly"/>
</dbReference>
<dbReference type="InterPro" id="IPR017562">
    <property type="entry name" value="Cyt_c_biogenesis_CcsA"/>
</dbReference>
<dbReference type="InterPro" id="IPR045062">
    <property type="entry name" value="Cyt_c_biogenesis_CcsA/CcmC"/>
</dbReference>
<dbReference type="NCBIfam" id="TIGR03144">
    <property type="entry name" value="cytochr_II_ccsB"/>
    <property type="match status" value="1"/>
</dbReference>
<dbReference type="PANTHER" id="PTHR30071:SF1">
    <property type="entry name" value="CYTOCHROME B_B6 PROTEIN-RELATED"/>
    <property type="match status" value="1"/>
</dbReference>
<dbReference type="PANTHER" id="PTHR30071">
    <property type="entry name" value="HEME EXPORTER PROTEIN C"/>
    <property type="match status" value="1"/>
</dbReference>
<dbReference type="Pfam" id="PF01578">
    <property type="entry name" value="Cytochrom_C_asm"/>
    <property type="match status" value="1"/>
</dbReference>
<geneLocation type="chloroplast"/>
<reference key="1">
    <citation type="journal article" date="2006" name="Plant Cell Rep.">
        <title>The complete chloroplast genome sequences of Solanum tuberosum and comparative analysis with Solanaceae species identified the presence of a 241-bp deletion in cultivated potato chloroplast DNA sequence.</title>
        <authorList>
            <person name="Chung H.-J."/>
            <person name="Jung J.D."/>
            <person name="Park H.-W."/>
            <person name="Kim J.-H."/>
            <person name="Cha H.W."/>
            <person name="Min S.R."/>
            <person name="Jeong W.-J."/>
            <person name="Liu J.R."/>
        </authorList>
    </citation>
    <scope>NUCLEOTIDE SEQUENCE [LARGE SCALE GENOMIC DNA]</scope>
    <source>
        <strain>cv. Desiree</strain>
    </source>
</reference>
<reference key="2">
    <citation type="submission" date="2006-02" db="EMBL/GenBank/DDBJ databases">
        <title>Complete chloroplast genome sequences of Solanum tuberosum cultivar Desiree and comparative analyses with other Solanaceae genomes.</title>
        <authorList>
            <person name="Gargano D."/>
            <person name="Scotti N."/>
            <person name="Vezzi A."/>
            <person name="Bilardi A."/>
            <person name="Valle G."/>
            <person name="Grillo S."/>
            <person name="Cardi T."/>
        </authorList>
    </citation>
    <scope>NUCLEOTIDE SEQUENCE [LARGE SCALE GENOMIC DNA]</scope>
    <source>
        <strain>cv. Desiree</strain>
    </source>
</reference>
<protein>
    <recommendedName>
        <fullName evidence="1">Cytochrome c biogenesis protein CcsA</fullName>
    </recommendedName>
</protein>
<keyword id="KW-0150">Chloroplast</keyword>
<keyword id="KW-0201">Cytochrome c-type biogenesis</keyword>
<keyword id="KW-0472">Membrane</keyword>
<keyword id="KW-0934">Plastid</keyword>
<keyword id="KW-1185">Reference proteome</keyword>
<keyword id="KW-0793">Thylakoid</keyword>
<keyword id="KW-0812">Transmembrane</keyword>
<keyword id="KW-1133">Transmembrane helix</keyword>